<protein>
    <recommendedName>
        <fullName evidence="1">Tyrosine recombinase XerD</fullName>
    </recommendedName>
</protein>
<name>XERD_STAAM</name>
<keyword id="KW-0131">Cell cycle</keyword>
<keyword id="KW-0132">Cell division</keyword>
<keyword id="KW-0159">Chromosome partition</keyword>
<keyword id="KW-0963">Cytoplasm</keyword>
<keyword id="KW-0229">DNA integration</keyword>
<keyword id="KW-0233">DNA recombination</keyword>
<keyword id="KW-0238">DNA-binding</keyword>
<organism>
    <name type="scientific">Staphylococcus aureus (strain Mu50 / ATCC 700699)</name>
    <dbReference type="NCBI Taxonomy" id="158878"/>
    <lineage>
        <taxon>Bacteria</taxon>
        <taxon>Bacillati</taxon>
        <taxon>Bacillota</taxon>
        <taxon>Bacilli</taxon>
        <taxon>Bacillales</taxon>
        <taxon>Staphylococcaceae</taxon>
        <taxon>Staphylococcus</taxon>
    </lineage>
</organism>
<gene>
    <name evidence="1" type="primary">xerD</name>
    <name type="ordered locus">SAV1497</name>
</gene>
<evidence type="ECO:0000255" key="1">
    <source>
        <dbReference type="HAMAP-Rule" id="MF_01807"/>
    </source>
</evidence>
<evidence type="ECO:0000255" key="2">
    <source>
        <dbReference type="PROSITE-ProRule" id="PRU01246"/>
    </source>
</evidence>
<evidence type="ECO:0000255" key="3">
    <source>
        <dbReference type="PROSITE-ProRule" id="PRU01248"/>
    </source>
</evidence>
<dbReference type="EMBL" id="BA000017">
    <property type="protein sequence ID" value="BAB57659.1"/>
    <property type="molecule type" value="Genomic_DNA"/>
</dbReference>
<dbReference type="RefSeq" id="WP_000447733.1">
    <property type="nucleotide sequence ID" value="NC_002758.2"/>
</dbReference>
<dbReference type="SMR" id="P0A0N9"/>
<dbReference type="KEGG" id="sav:SAV1497"/>
<dbReference type="HOGENOM" id="CLU_027562_9_6_9"/>
<dbReference type="PhylomeDB" id="P0A0N9"/>
<dbReference type="Proteomes" id="UP000002481">
    <property type="component" value="Chromosome"/>
</dbReference>
<dbReference type="GO" id="GO:0005737">
    <property type="term" value="C:cytoplasm"/>
    <property type="evidence" value="ECO:0007669"/>
    <property type="project" value="UniProtKB-SubCell"/>
</dbReference>
<dbReference type="GO" id="GO:0003677">
    <property type="term" value="F:DNA binding"/>
    <property type="evidence" value="ECO:0007669"/>
    <property type="project" value="UniProtKB-KW"/>
</dbReference>
<dbReference type="GO" id="GO:0009037">
    <property type="term" value="F:tyrosine-based site-specific recombinase activity"/>
    <property type="evidence" value="ECO:0007669"/>
    <property type="project" value="UniProtKB-UniRule"/>
</dbReference>
<dbReference type="GO" id="GO:0051301">
    <property type="term" value="P:cell division"/>
    <property type="evidence" value="ECO:0007669"/>
    <property type="project" value="UniProtKB-KW"/>
</dbReference>
<dbReference type="GO" id="GO:0007059">
    <property type="term" value="P:chromosome segregation"/>
    <property type="evidence" value="ECO:0007669"/>
    <property type="project" value="UniProtKB-UniRule"/>
</dbReference>
<dbReference type="GO" id="GO:0006313">
    <property type="term" value="P:DNA transposition"/>
    <property type="evidence" value="ECO:0007669"/>
    <property type="project" value="UniProtKB-UniRule"/>
</dbReference>
<dbReference type="CDD" id="cd00798">
    <property type="entry name" value="INT_XerDC_C"/>
    <property type="match status" value="1"/>
</dbReference>
<dbReference type="Gene3D" id="1.10.150.130">
    <property type="match status" value="1"/>
</dbReference>
<dbReference type="Gene3D" id="1.10.443.10">
    <property type="entry name" value="Intergrase catalytic core"/>
    <property type="match status" value="1"/>
</dbReference>
<dbReference type="HAMAP" id="MF_01808">
    <property type="entry name" value="Recomb_XerC_XerD"/>
    <property type="match status" value="1"/>
</dbReference>
<dbReference type="HAMAP" id="MF_01807">
    <property type="entry name" value="Recomb_XerD"/>
    <property type="match status" value="1"/>
</dbReference>
<dbReference type="InterPro" id="IPR044068">
    <property type="entry name" value="CB"/>
</dbReference>
<dbReference type="InterPro" id="IPR011010">
    <property type="entry name" value="DNA_brk_join_enz"/>
</dbReference>
<dbReference type="InterPro" id="IPR013762">
    <property type="entry name" value="Integrase-like_cat_sf"/>
</dbReference>
<dbReference type="InterPro" id="IPR002104">
    <property type="entry name" value="Integrase_catalytic"/>
</dbReference>
<dbReference type="InterPro" id="IPR010998">
    <property type="entry name" value="Integrase_recombinase_N"/>
</dbReference>
<dbReference type="InterPro" id="IPR004107">
    <property type="entry name" value="Integrase_SAM-like_N"/>
</dbReference>
<dbReference type="InterPro" id="IPR011932">
    <property type="entry name" value="Recomb_XerD"/>
</dbReference>
<dbReference type="InterPro" id="IPR023009">
    <property type="entry name" value="Tyrosine_recombinase_XerC/XerD"/>
</dbReference>
<dbReference type="InterPro" id="IPR050090">
    <property type="entry name" value="Tyrosine_recombinase_XerCD"/>
</dbReference>
<dbReference type="NCBIfam" id="NF001399">
    <property type="entry name" value="PRK00283.1"/>
    <property type="match status" value="1"/>
</dbReference>
<dbReference type="NCBIfam" id="NF040815">
    <property type="entry name" value="recomb_XerA_Arch"/>
    <property type="match status" value="1"/>
</dbReference>
<dbReference type="NCBIfam" id="TIGR02225">
    <property type="entry name" value="recomb_XerD"/>
    <property type="match status" value="1"/>
</dbReference>
<dbReference type="PANTHER" id="PTHR30349">
    <property type="entry name" value="PHAGE INTEGRASE-RELATED"/>
    <property type="match status" value="1"/>
</dbReference>
<dbReference type="PANTHER" id="PTHR30349:SF81">
    <property type="entry name" value="TYROSINE RECOMBINASE XERC"/>
    <property type="match status" value="1"/>
</dbReference>
<dbReference type="Pfam" id="PF02899">
    <property type="entry name" value="Phage_int_SAM_1"/>
    <property type="match status" value="1"/>
</dbReference>
<dbReference type="Pfam" id="PF00589">
    <property type="entry name" value="Phage_integrase"/>
    <property type="match status" value="1"/>
</dbReference>
<dbReference type="SUPFAM" id="SSF56349">
    <property type="entry name" value="DNA breaking-rejoining enzymes"/>
    <property type="match status" value="1"/>
</dbReference>
<dbReference type="PROSITE" id="PS51900">
    <property type="entry name" value="CB"/>
    <property type="match status" value="1"/>
</dbReference>
<dbReference type="PROSITE" id="PS51898">
    <property type="entry name" value="TYR_RECOMBINASE"/>
    <property type="match status" value="1"/>
</dbReference>
<feature type="chain" id="PRO_0000095417" description="Tyrosine recombinase XerD">
    <location>
        <begin position="1"/>
        <end position="295"/>
    </location>
</feature>
<feature type="domain" description="Core-binding (CB)" evidence="3">
    <location>
        <begin position="1"/>
        <end position="85"/>
    </location>
</feature>
<feature type="domain" description="Tyr recombinase" evidence="2">
    <location>
        <begin position="106"/>
        <end position="289"/>
    </location>
</feature>
<feature type="active site" evidence="1">
    <location>
        <position position="146"/>
    </location>
</feature>
<feature type="active site" evidence="1">
    <location>
        <position position="170"/>
    </location>
</feature>
<feature type="active site" evidence="1">
    <location>
        <position position="241"/>
    </location>
</feature>
<feature type="active site" evidence="1">
    <location>
        <position position="244"/>
    </location>
</feature>
<feature type="active site" evidence="1">
    <location>
        <position position="267"/>
    </location>
</feature>
<feature type="active site" description="O-(3'-phospho-DNA)-tyrosine intermediate" evidence="1">
    <location>
        <position position="276"/>
    </location>
</feature>
<reference key="1">
    <citation type="journal article" date="2001" name="Lancet">
        <title>Whole genome sequencing of meticillin-resistant Staphylococcus aureus.</title>
        <authorList>
            <person name="Kuroda M."/>
            <person name="Ohta T."/>
            <person name="Uchiyama I."/>
            <person name="Baba T."/>
            <person name="Yuzawa H."/>
            <person name="Kobayashi I."/>
            <person name="Cui L."/>
            <person name="Oguchi A."/>
            <person name="Aoki K."/>
            <person name="Nagai Y."/>
            <person name="Lian J.-Q."/>
            <person name="Ito T."/>
            <person name="Kanamori M."/>
            <person name="Matsumaru H."/>
            <person name="Maruyama A."/>
            <person name="Murakami H."/>
            <person name="Hosoyama A."/>
            <person name="Mizutani-Ui Y."/>
            <person name="Takahashi N.K."/>
            <person name="Sawano T."/>
            <person name="Inoue R."/>
            <person name="Kaito C."/>
            <person name="Sekimizu K."/>
            <person name="Hirakawa H."/>
            <person name="Kuhara S."/>
            <person name="Goto S."/>
            <person name="Yabuzaki J."/>
            <person name="Kanehisa M."/>
            <person name="Yamashita A."/>
            <person name="Oshima K."/>
            <person name="Furuya K."/>
            <person name="Yoshino C."/>
            <person name="Shiba T."/>
            <person name="Hattori M."/>
            <person name="Ogasawara N."/>
            <person name="Hayashi H."/>
            <person name="Hiramatsu K."/>
        </authorList>
    </citation>
    <scope>NUCLEOTIDE SEQUENCE [LARGE SCALE GENOMIC DNA]</scope>
    <source>
        <strain>Mu50 / ATCC 700699</strain>
    </source>
</reference>
<accession>P0A0N9</accession>
<accession>O87666</accession>
<accession>Q9KJF7</accession>
<accession>Q9RGN6</accession>
<proteinExistence type="inferred from homology"/>
<comment type="function">
    <text evidence="1">Site-specific tyrosine recombinase, which acts by catalyzing the cutting and rejoining of the recombining DNA molecules. The XerC-XerD complex is essential to convert dimers of the bacterial chromosome into monomers to permit their segregation at cell division. It also contributes to the segregational stability of plasmids.</text>
</comment>
<comment type="subunit">
    <text evidence="1">Forms a cyclic heterotetrameric complex composed of two molecules of XerC and two molecules of XerD.</text>
</comment>
<comment type="subcellular location">
    <subcellularLocation>
        <location evidence="1">Cytoplasm</location>
    </subcellularLocation>
</comment>
<comment type="similarity">
    <text evidence="1">Belongs to the 'phage' integrase family. XerD subfamily.</text>
</comment>
<sequence length="295" mass="34133">METIIEEYLRFIQIEKGLSSNTIGAYRRDLKKYQDYMTEHHISHIDFIDRQLIQECLGHLIDQGQSAKSIARFISTIRSFHQFAIREKYAAKDPTVLLDSPKYDKKLPDVLNVDEVLALLETPDLNKINGYRDRTMLELLYATGMRVSELIHLELENVNLIMGFVRVFGKGDKERIVPLGDAVIEYLTTYIETIRPQLLKKTVTEVLFLNMHGKPLSRQAIWKMIKQNGVKANIKKTLTPHTLRHSFATHLLENGADLRAVQEMLGHSDISTTQLYTHVSKSQIRKMYNQFHPRA</sequence>